<feature type="chain" id="PRO_1000024086" description="Dihydroorotase">
    <location>
        <begin position="1"/>
        <end position="425"/>
    </location>
</feature>
<feature type="active site" evidence="1">
    <location>
        <position position="301"/>
    </location>
</feature>
<feature type="binding site" evidence="1">
    <location>
        <position position="56"/>
    </location>
    <ligand>
        <name>Zn(2+)</name>
        <dbReference type="ChEBI" id="CHEBI:29105"/>
        <label>1</label>
    </ligand>
</feature>
<feature type="binding site" evidence="1">
    <location>
        <begin position="58"/>
        <end position="60"/>
    </location>
    <ligand>
        <name>substrate</name>
    </ligand>
</feature>
<feature type="binding site" evidence="1">
    <location>
        <position position="58"/>
    </location>
    <ligand>
        <name>Zn(2+)</name>
        <dbReference type="ChEBI" id="CHEBI:29105"/>
        <label>1</label>
    </ligand>
</feature>
<feature type="binding site" evidence="1">
    <location>
        <position position="90"/>
    </location>
    <ligand>
        <name>substrate</name>
    </ligand>
</feature>
<feature type="binding site" evidence="1">
    <location>
        <position position="148"/>
    </location>
    <ligand>
        <name>Zn(2+)</name>
        <dbReference type="ChEBI" id="CHEBI:29105"/>
        <label>1</label>
    </ligand>
</feature>
<feature type="binding site" evidence="1">
    <location>
        <position position="148"/>
    </location>
    <ligand>
        <name>Zn(2+)</name>
        <dbReference type="ChEBI" id="CHEBI:29105"/>
        <label>2</label>
    </ligand>
</feature>
<feature type="binding site" evidence="1">
    <location>
        <position position="175"/>
    </location>
    <ligand>
        <name>Zn(2+)</name>
        <dbReference type="ChEBI" id="CHEBI:29105"/>
        <label>2</label>
    </ligand>
</feature>
<feature type="binding site" evidence="1">
    <location>
        <position position="228"/>
    </location>
    <ligand>
        <name>Zn(2+)</name>
        <dbReference type="ChEBI" id="CHEBI:29105"/>
        <label>2</label>
    </ligand>
</feature>
<feature type="binding site" evidence="1">
    <location>
        <position position="274"/>
    </location>
    <ligand>
        <name>substrate</name>
    </ligand>
</feature>
<feature type="binding site" evidence="1">
    <location>
        <position position="301"/>
    </location>
    <ligand>
        <name>Zn(2+)</name>
        <dbReference type="ChEBI" id="CHEBI:29105"/>
        <label>1</label>
    </ligand>
</feature>
<feature type="binding site" evidence="1">
    <location>
        <position position="305"/>
    </location>
    <ligand>
        <name>substrate</name>
    </ligand>
</feature>
<feature type="binding site" evidence="1">
    <location>
        <begin position="319"/>
        <end position="320"/>
    </location>
    <ligand>
        <name>substrate</name>
    </ligand>
</feature>
<gene>
    <name evidence="1" type="primary">pyrC</name>
    <name type="ordered locus">LBA1381</name>
</gene>
<comment type="function">
    <text evidence="1">Catalyzes the reversible cyclization of carbamoyl aspartate to dihydroorotate.</text>
</comment>
<comment type="catalytic activity">
    <reaction evidence="1">
        <text>(S)-dihydroorotate + H2O = N-carbamoyl-L-aspartate + H(+)</text>
        <dbReference type="Rhea" id="RHEA:24296"/>
        <dbReference type="ChEBI" id="CHEBI:15377"/>
        <dbReference type="ChEBI" id="CHEBI:15378"/>
        <dbReference type="ChEBI" id="CHEBI:30864"/>
        <dbReference type="ChEBI" id="CHEBI:32814"/>
        <dbReference type="EC" id="3.5.2.3"/>
    </reaction>
</comment>
<comment type="cofactor">
    <cofactor evidence="1">
        <name>Zn(2+)</name>
        <dbReference type="ChEBI" id="CHEBI:29105"/>
    </cofactor>
    <text evidence="1">Binds 2 Zn(2+) ions per subunit.</text>
</comment>
<comment type="pathway">
    <text evidence="1">Pyrimidine metabolism; UMP biosynthesis via de novo pathway; (S)-dihydroorotate from bicarbonate: step 3/3.</text>
</comment>
<comment type="similarity">
    <text evidence="1">Belongs to the metallo-dependent hydrolases superfamily. DHOase family. Class I DHOase subfamily.</text>
</comment>
<reference key="1">
    <citation type="journal article" date="2005" name="Proc. Natl. Acad. Sci. U.S.A.">
        <title>Complete genome sequence of the probiotic lactic acid bacterium Lactobacillus acidophilus NCFM.</title>
        <authorList>
            <person name="Altermann E."/>
            <person name="Russell W.M."/>
            <person name="Azcarate-Peril M.A."/>
            <person name="Barrangou R."/>
            <person name="Buck B.L."/>
            <person name="McAuliffe O."/>
            <person name="Souther N."/>
            <person name="Dobson A."/>
            <person name="Duong T."/>
            <person name="Callanan M."/>
            <person name="Lick S."/>
            <person name="Hamrick A."/>
            <person name="Cano R."/>
            <person name="Klaenhammer T.R."/>
        </authorList>
    </citation>
    <scope>NUCLEOTIDE SEQUENCE [LARGE SCALE GENOMIC DNA]</scope>
    <source>
        <strain>ATCC 700396 / NCK56 / N2 / NCFM</strain>
    </source>
</reference>
<protein>
    <recommendedName>
        <fullName evidence="1">Dihydroorotase</fullName>
        <shortName evidence="1">DHOase</shortName>
        <ecNumber evidence="1">3.5.2.3</ecNumber>
    </recommendedName>
</protein>
<sequence>MKTVIKNGTVYQNGRLIHADVLIEDQKIKVIGTNLTGDKEFDATGKLVAPGLVDVHVHYREPGQTYKEDIRTGSEAAARGGFTTVGAMPNVTPVPNTPELMEKMVKKNQEKGIVHIFQYGPITNDETTDIIPDYAALKKAGAFALSNDGHGVQTAQTMYLAMQKAKANNLIIATHAQDDSLFNHGIVNEGKKAEELNLPPVTELAETTQIARDLLLAQKTGVHYHICHVSTKTSVELVRMAKARGINVTCEVAPHHILLTDDDIPKDNGYYKMNPPLRNKEDQAALLVGLLDGTIDLIATDHAPHAKKEKQGGMKGAAFGITGSETAFSTLYTKFVKKDKVFTLEQLLSWLSDKPAEAFGLKDAGVLEPGKNADIAIFDIEHEATIEEKDYKSKGVNTPFTGQKVYGETVMTMVNGKVVYQRGTK</sequence>
<name>PYRC_LACAC</name>
<accession>Q5FJB8</accession>
<evidence type="ECO:0000255" key="1">
    <source>
        <dbReference type="HAMAP-Rule" id="MF_00220"/>
    </source>
</evidence>
<dbReference type="EC" id="3.5.2.3" evidence="1"/>
<dbReference type="EMBL" id="CP000033">
    <property type="protein sequence ID" value="AAV43206.1"/>
    <property type="molecule type" value="Genomic_DNA"/>
</dbReference>
<dbReference type="RefSeq" id="WP_011254442.1">
    <property type="nucleotide sequence ID" value="NC_006814.3"/>
</dbReference>
<dbReference type="RefSeq" id="YP_194237.1">
    <property type="nucleotide sequence ID" value="NC_006814.3"/>
</dbReference>
<dbReference type="SMR" id="Q5FJB8"/>
<dbReference type="STRING" id="272621.LBA1381"/>
<dbReference type="KEGG" id="lac:LBA1381"/>
<dbReference type="PATRIC" id="fig|272621.13.peg.1307"/>
<dbReference type="eggNOG" id="COG0044">
    <property type="taxonomic scope" value="Bacteria"/>
</dbReference>
<dbReference type="HOGENOM" id="CLU_015572_1_0_9"/>
<dbReference type="OrthoDB" id="9765462at2"/>
<dbReference type="BioCyc" id="LACI272621:G1G49-1355-MONOMER"/>
<dbReference type="UniPathway" id="UPA00070">
    <property type="reaction ID" value="UER00117"/>
</dbReference>
<dbReference type="Proteomes" id="UP000006381">
    <property type="component" value="Chromosome"/>
</dbReference>
<dbReference type="GO" id="GO:0005737">
    <property type="term" value="C:cytoplasm"/>
    <property type="evidence" value="ECO:0007669"/>
    <property type="project" value="TreeGrafter"/>
</dbReference>
<dbReference type="GO" id="GO:0004038">
    <property type="term" value="F:allantoinase activity"/>
    <property type="evidence" value="ECO:0007669"/>
    <property type="project" value="TreeGrafter"/>
</dbReference>
<dbReference type="GO" id="GO:0004151">
    <property type="term" value="F:dihydroorotase activity"/>
    <property type="evidence" value="ECO:0007669"/>
    <property type="project" value="UniProtKB-UniRule"/>
</dbReference>
<dbReference type="GO" id="GO:0008270">
    <property type="term" value="F:zinc ion binding"/>
    <property type="evidence" value="ECO:0007669"/>
    <property type="project" value="UniProtKB-UniRule"/>
</dbReference>
<dbReference type="GO" id="GO:0044205">
    <property type="term" value="P:'de novo' UMP biosynthetic process"/>
    <property type="evidence" value="ECO:0007669"/>
    <property type="project" value="UniProtKB-UniRule"/>
</dbReference>
<dbReference type="GO" id="GO:0006145">
    <property type="term" value="P:purine nucleobase catabolic process"/>
    <property type="evidence" value="ECO:0007669"/>
    <property type="project" value="TreeGrafter"/>
</dbReference>
<dbReference type="CDD" id="cd01317">
    <property type="entry name" value="DHOase_IIa"/>
    <property type="match status" value="1"/>
</dbReference>
<dbReference type="Gene3D" id="3.20.20.140">
    <property type="entry name" value="Metal-dependent hydrolases"/>
    <property type="match status" value="1"/>
</dbReference>
<dbReference type="HAMAP" id="MF_00220_B">
    <property type="entry name" value="PyrC_classI_B"/>
    <property type="match status" value="1"/>
</dbReference>
<dbReference type="InterPro" id="IPR006680">
    <property type="entry name" value="Amidohydro-rel"/>
</dbReference>
<dbReference type="InterPro" id="IPR004722">
    <property type="entry name" value="DHOase"/>
</dbReference>
<dbReference type="InterPro" id="IPR050138">
    <property type="entry name" value="DHOase/Allantoinase_Hydrolase"/>
</dbReference>
<dbReference type="InterPro" id="IPR002195">
    <property type="entry name" value="Dihydroorotase_CS"/>
</dbReference>
<dbReference type="InterPro" id="IPR011059">
    <property type="entry name" value="Metal-dep_hydrolase_composite"/>
</dbReference>
<dbReference type="InterPro" id="IPR032466">
    <property type="entry name" value="Metal_Hydrolase"/>
</dbReference>
<dbReference type="NCBIfam" id="NF006837">
    <property type="entry name" value="PRK09357.1-2"/>
    <property type="match status" value="1"/>
</dbReference>
<dbReference type="NCBIfam" id="TIGR00857">
    <property type="entry name" value="pyrC_multi"/>
    <property type="match status" value="1"/>
</dbReference>
<dbReference type="PANTHER" id="PTHR43668">
    <property type="entry name" value="ALLANTOINASE"/>
    <property type="match status" value="1"/>
</dbReference>
<dbReference type="PANTHER" id="PTHR43668:SF2">
    <property type="entry name" value="ALLANTOINASE"/>
    <property type="match status" value="1"/>
</dbReference>
<dbReference type="Pfam" id="PF01979">
    <property type="entry name" value="Amidohydro_1"/>
    <property type="match status" value="1"/>
</dbReference>
<dbReference type="SUPFAM" id="SSF51338">
    <property type="entry name" value="Composite domain of metallo-dependent hydrolases"/>
    <property type="match status" value="1"/>
</dbReference>
<dbReference type="SUPFAM" id="SSF51556">
    <property type="entry name" value="Metallo-dependent hydrolases"/>
    <property type="match status" value="1"/>
</dbReference>
<dbReference type="PROSITE" id="PS00483">
    <property type="entry name" value="DIHYDROOROTASE_2"/>
    <property type="match status" value="1"/>
</dbReference>
<proteinExistence type="inferred from homology"/>
<keyword id="KW-0378">Hydrolase</keyword>
<keyword id="KW-0479">Metal-binding</keyword>
<keyword id="KW-0665">Pyrimidine biosynthesis</keyword>
<keyword id="KW-1185">Reference proteome</keyword>
<keyword id="KW-0862">Zinc</keyword>
<organism>
    <name type="scientific">Lactobacillus acidophilus (strain ATCC 700396 / NCK56 / N2 / NCFM)</name>
    <dbReference type="NCBI Taxonomy" id="272621"/>
    <lineage>
        <taxon>Bacteria</taxon>
        <taxon>Bacillati</taxon>
        <taxon>Bacillota</taxon>
        <taxon>Bacilli</taxon>
        <taxon>Lactobacillales</taxon>
        <taxon>Lactobacillaceae</taxon>
        <taxon>Lactobacillus</taxon>
    </lineage>
</organism>